<proteinExistence type="inferred from homology"/>
<reference key="1">
    <citation type="journal article" date="2005" name="Proc. Natl. Acad. Sci. U.S.A.">
        <title>Comparison of the complete genome sequences of Pseudomonas syringae pv. syringae B728a and pv. tomato DC3000.</title>
        <authorList>
            <person name="Feil H."/>
            <person name="Feil W.S."/>
            <person name="Chain P."/>
            <person name="Larimer F."/>
            <person name="Dibartolo G."/>
            <person name="Copeland A."/>
            <person name="Lykidis A."/>
            <person name="Trong S."/>
            <person name="Nolan M."/>
            <person name="Goltsman E."/>
            <person name="Thiel J."/>
            <person name="Malfatti S."/>
            <person name="Loper J.E."/>
            <person name="Lapidus A."/>
            <person name="Detter J.C."/>
            <person name="Land M."/>
            <person name="Richardson P.M."/>
            <person name="Kyrpides N.C."/>
            <person name="Ivanova N."/>
            <person name="Lindow S.E."/>
        </authorList>
    </citation>
    <scope>NUCLEOTIDE SEQUENCE [LARGE SCALE GENOMIC DNA]</scope>
    <source>
        <strain>B728a</strain>
    </source>
</reference>
<comment type="function">
    <text evidence="1">Catalyzes the methylthiolation of N6-(dimethylallyl)adenosine (i(6)A), leading to the formation of 2-methylthio-N6-(dimethylallyl)adenosine (ms(2)i(6)A) at position 37 in tRNAs that read codons beginning with uridine.</text>
</comment>
<comment type="catalytic activity">
    <reaction evidence="1">
        <text>N(6)-dimethylallyladenosine(37) in tRNA + (sulfur carrier)-SH + AH2 + 2 S-adenosyl-L-methionine = 2-methylsulfanyl-N(6)-dimethylallyladenosine(37) in tRNA + (sulfur carrier)-H + 5'-deoxyadenosine + L-methionine + A + S-adenosyl-L-homocysteine + 2 H(+)</text>
        <dbReference type="Rhea" id="RHEA:37067"/>
        <dbReference type="Rhea" id="RHEA-COMP:10375"/>
        <dbReference type="Rhea" id="RHEA-COMP:10376"/>
        <dbReference type="Rhea" id="RHEA-COMP:14737"/>
        <dbReference type="Rhea" id="RHEA-COMP:14739"/>
        <dbReference type="ChEBI" id="CHEBI:13193"/>
        <dbReference type="ChEBI" id="CHEBI:15378"/>
        <dbReference type="ChEBI" id="CHEBI:17319"/>
        <dbReference type="ChEBI" id="CHEBI:17499"/>
        <dbReference type="ChEBI" id="CHEBI:29917"/>
        <dbReference type="ChEBI" id="CHEBI:57844"/>
        <dbReference type="ChEBI" id="CHEBI:57856"/>
        <dbReference type="ChEBI" id="CHEBI:59789"/>
        <dbReference type="ChEBI" id="CHEBI:64428"/>
        <dbReference type="ChEBI" id="CHEBI:74415"/>
        <dbReference type="ChEBI" id="CHEBI:74417"/>
        <dbReference type="EC" id="2.8.4.3"/>
    </reaction>
</comment>
<comment type="cofactor">
    <cofactor evidence="1">
        <name>[4Fe-4S] cluster</name>
        <dbReference type="ChEBI" id="CHEBI:49883"/>
    </cofactor>
    <text evidence="1">Binds 2 [4Fe-4S] clusters. One cluster is coordinated with 3 cysteines and an exchangeable S-adenosyl-L-methionine.</text>
</comment>
<comment type="subunit">
    <text evidence="1">Monomer.</text>
</comment>
<comment type="subcellular location">
    <subcellularLocation>
        <location evidence="1">Cytoplasm</location>
    </subcellularLocation>
</comment>
<comment type="similarity">
    <text evidence="1">Belongs to the methylthiotransferase family. MiaB subfamily.</text>
</comment>
<gene>
    <name evidence="1" type="primary">miaB</name>
    <name type="ordered locus">Psyr_4345</name>
</gene>
<protein>
    <recommendedName>
        <fullName evidence="1">tRNA-2-methylthio-N(6)-dimethylallyladenosine synthase</fullName>
        <ecNumber evidence="1">2.8.4.3</ecNumber>
    </recommendedName>
    <alternativeName>
        <fullName evidence="1">(Dimethylallyl)adenosine tRNA methylthiotransferase MiaB</fullName>
    </alternativeName>
    <alternativeName>
        <fullName evidence="1">tRNA-i(6)A37 methylthiotransferase</fullName>
    </alternativeName>
</protein>
<organism>
    <name type="scientific">Pseudomonas syringae pv. syringae (strain B728a)</name>
    <dbReference type="NCBI Taxonomy" id="205918"/>
    <lineage>
        <taxon>Bacteria</taxon>
        <taxon>Pseudomonadati</taxon>
        <taxon>Pseudomonadota</taxon>
        <taxon>Gammaproteobacteria</taxon>
        <taxon>Pseudomonadales</taxon>
        <taxon>Pseudomonadaceae</taxon>
        <taxon>Pseudomonas</taxon>
        <taxon>Pseudomonas syringae</taxon>
    </lineage>
</organism>
<name>MIAB_PSEU2</name>
<keyword id="KW-0004">4Fe-4S</keyword>
<keyword id="KW-0963">Cytoplasm</keyword>
<keyword id="KW-0408">Iron</keyword>
<keyword id="KW-0411">Iron-sulfur</keyword>
<keyword id="KW-0479">Metal-binding</keyword>
<keyword id="KW-0949">S-adenosyl-L-methionine</keyword>
<keyword id="KW-0808">Transferase</keyword>
<keyword id="KW-0819">tRNA processing</keyword>
<evidence type="ECO:0000255" key="1">
    <source>
        <dbReference type="HAMAP-Rule" id="MF_01864"/>
    </source>
</evidence>
<evidence type="ECO:0000255" key="2">
    <source>
        <dbReference type="PROSITE-ProRule" id="PRU01266"/>
    </source>
</evidence>
<accession>Q4ZN97</accession>
<sequence length="442" mass="49451">MAKKLYIETHGCQMNEYDSSRMVDLLGEHQALEVTARAEDADVILLNTCSIRERAQDRVYSQLGRWRELKLANPEMVIAVGGCVASQEGAAIRDRAPYVDVVFGPQTLHRLPEMIDAARVTRLPQVDVSFPEIEKFDHLPEPRVDGPSAYVSVMEGCSKYCTFCVVPYTRGEEVSRPFDDVLSEVIHLAENGVREVTLLGQNVNGYRGTTHDGRVADLADLIRVVAAVDGIDRIRYTTSHPLEFSDSLIQAHAEVPELVKHLHLPVQSGSDRILAAMKRNHTTLEYKSRLRKLRAAVPGISISSDFIVGFPGETEKDFDNTMKLIEDVGFDFSFSFVYSPRPGTPAADLKDDTPEALKKERLAALQHRLNQQGFEISRQMVGSIQRILVTDYSKKDPGELQGRTENNRIVNFRCDNPKLIGQFADVHIDDAQPHSLRGSLLQ</sequence>
<dbReference type="EC" id="2.8.4.3" evidence="1"/>
<dbReference type="EMBL" id="CP000075">
    <property type="protein sequence ID" value="AAY39375.1"/>
    <property type="molecule type" value="Genomic_DNA"/>
</dbReference>
<dbReference type="RefSeq" id="WP_003368786.1">
    <property type="nucleotide sequence ID" value="NC_007005.1"/>
</dbReference>
<dbReference type="RefSeq" id="YP_237413.1">
    <property type="nucleotide sequence ID" value="NC_007005.1"/>
</dbReference>
<dbReference type="SMR" id="Q4ZN97"/>
<dbReference type="STRING" id="205918.Psyr_4345"/>
<dbReference type="GeneID" id="77280189"/>
<dbReference type="KEGG" id="psb:Psyr_4345"/>
<dbReference type="PATRIC" id="fig|205918.7.peg.4484"/>
<dbReference type="eggNOG" id="COG0621">
    <property type="taxonomic scope" value="Bacteria"/>
</dbReference>
<dbReference type="HOGENOM" id="CLU_018697_2_0_6"/>
<dbReference type="OrthoDB" id="9805215at2"/>
<dbReference type="Proteomes" id="UP000000426">
    <property type="component" value="Chromosome"/>
</dbReference>
<dbReference type="GO" id="GO:0005829">
    <property type="term" value="C:cytosol"/>
    <property type="evidence" value="ECO:0007669"/>
    <property type="project" value="TreeGrafter"/>
</dbReference>
<dbReference type="GO" id="GO:0051539">
    <property type="term" value="F:4 iron, 4 sulfur cluster binding"/>
    <property type="evidence" value="ECO:0007669"/>
    <property type="project" value="UniProtKB-UniRule"/>
</dbReference>
<dbReference type="GO" id="GO:0046872">
    <property type="term" value="F:metal ion binding"/>
    <property type="evidence" value="ECO:0007669"/>
    <property type="project" value="UniProtKB-KW"/>
</dbReference>
<dbReference type="GO" id="GO:0035597">
    <property type="term" value="F:N6-isopentenyladenosine methylthiotransferase activity"/>
    <property type="evidence" value="ECO:0007669"/>
    <property type="project" value="TreeGrafter"/>
</dbReference>
<dbReference type="CDD" id="cd01335">
    <property type="entry name" value="Radical_SAM"/>
    <property type="match status" value="1"/>
</dbReference>
<dbReference type="FunFam" id="3.40.50.12160:FF:000001">
    <property type="entry name" value="tRNA-2-methylthio-N(6)-dimethylallyladenosine synthase"/>
    <property type="match status" value="1"/>
</dbReference>
<dbReference type="FunFam" id="3.80.30.20:FF:000001">
    <property type="entry name" value="tRNA-2-methylthio-N(6)-dimethylallyladenosine synthase 2"/>
    <property type="match status" value="1"/>
</dbReference>
<dbReference type="Gene3D" id="3.40.50.12160">
    <property type="entry name" value="Methylthiotransferase, N-terminal domain"/>
    <property type="match status" value="1"/>
</dbReference>
<dbReference type="Gene3D" id="3.80.30.20">
    <property type="entry name" value="tm_1862 like domain"/>
    <property type="match status" value="1"/>
</dbReference>
<dbReference type="HAMAP" id="MF_01864">
    <property type="entry name" value="tRNA_metthiotr_MiaB"/>
    <property type="match status" value="1"/>
</dbReference>
<dbReference type="InterPro" id="IPR006638">
    <property type="entry name" value="Elp3/MiaA/NifB-like_rSAM"/>
</dbReference>
<dbReference type="InterPro" id="IPR005839">
    <property type="entry name" value="Methylthiotransferase"/>
</dbReference>
<dbReference type="InterPro" id="IPR020612">
    <property type="entry name" value="Methylthiotransferase_CS"/>
</dbReference>
<dbReference type="InterPro" id="IPR013848">
    <property type="entry name" value="Methylthiotransferase_N"/>
</dbReference>
<dbReference type="InterPro" id="IPR038135">
    <property type="entry name" value="Methylthiotransferase_N_sf"/>
</dbReference>
<dbReference type="InterPro" id="IPR006463">
    <property type="entry name" value="MiaB_methiolase"/>
</dbReference>
<dbReference type="InterPro" id="IPR007197">
    <property type="entry name" value="rSAM"/>
</dbReference>
<dbReference type="InterPro" id="IPR023404">
    <property type="entry name" value="rSAM_horseshoe"/>
</dbReference>
<dbReference type="InterPro" id="IPR002792">
    <property type="entry name" value="TRAM_dom"/>
</dbReference>
<dbReference type="NCBIfam" id="TIGR01574">
    <property type="entry name" value="miaB-methiolase"/>
    <property type="match status" value="1"/>
</dbReference>
<dbReference type="NCBIfam" id="TIGR00089">
    <property type="entry name" value="MiaB/RimO family radical SAM methylthiotransferase"/>
    <property type="match status" value="1"/>
</dbReference>
<dbReference type="PANTHER" id="PTHR43020">
    <property type="entry name" value="CDK5 REGULATORY SUBUNIT-ASSOCIATED PROTEIN 1"/>
    <property type="match status" value="1"/>
</dbReference>
<dbReference type="PANTHER" id="PTHR43020:SF2">
    <property type="entry name" value="MITOCHONDRIAL TRNA METHYLTHIOTRANSFERASE CDK5RAP1"/>
    <property type="match status" value="1"/>
</dbReference>
<dbReference type="Pfam" id="PF04055">
    <property type="entry name" value="Radical_SAM"/>
    <property type="match status" value="1"/>
</dbReference>
<dbReference type="Pfam" id="PF01938">
    <property type="entry name" value="TRAM"/>
    <property type="match status" value="1"/>
</dbReference>
<dbReference type="Pfam" id="PF00919">
    <property type="entry name" value="UPF0004"/>
    <property type="match status" value="1"/>
</dbReference>
<dbReference type="SFLD" id="SFLDF00273">
    <property type="entry name" value="(dimethylallyl)adenosine_tRNA"/>
    <property type="match status" value="1"/>
</dbReference>
<dbReference type="SFLD" id="SFLDG01082">
    <property type="entry name" value="B12-binding_domain_containing"/>
    <property type="match status" value="1"/>
</dbReference>
<dbReference type="SFLD" id="SFLDS00029">
    <property type="entry name" value="Radical_SAM"/>
    <property type="match status" value="1"/>
</dbReference>
<dbReference type="SMART" id="SM00729">
    <property type="entry name" value="Elp3"/>
    <property type="match status" value="1"/>
</dbReference>
<dbReference type="SUPFAM" id="SSF102114">
    <property type="entry name" value="Radical SAM enzymes"/>
    <property type="match status" value="1"/>
</dbReference>
<dbReference type="PROSITE" id="PS51449">
    <property type="entry name" value="MTTASE_N"/>
    <property type="match status" value="1"/>
</dbReference>
<dbReference type="PROSITE" id="PS01278">
    <property type="entry name" value="MTTASE_RADICAL"/>
    <property type="match status" value="1"/>
</dbReference>
<dbReference type="PROSITE" id="PS51918">
    <property type="entry name" value="RADICAL_SAM"/>
    <property type="match status" value="1"/>
</dbReference>
<dbReference type="PROSITE" id="PS50926">
    <property type="entry name" value="TRAM"/>
    <property type="match status" value="1"/>
</dbReference>
<feature type="chain" id="PRO_0000374469" description="tRNA-2-methylthio-N(6)-dimethylallyladenosine synthase">
    <location>
        <begin position="1"/>
        <end position="442"/>
    </location>
</feature>
<feature type="domain" description="MTTase N-terminal" evidence="1">
    <location>
        <begin position="3"/>
        <end position="120"/>
    </location>
</feature>
<feature type="domain" description="Radical SAM core" evidence="2">
    <location>
        <begin position="143"/>
        <end position="375"/>
    </location>
</feature>
<feature type="domain" description="TRAM" evidence="1">
    <location>
        <begin position="378"/>
        <end position="442"/>
    </location>
</feature>
<feature type="binding site" evidence="1">
    <location>
        <position position="12"/>
    </location>
    <ligand>
        <name>[4Fe-4S] cluster</name>
        <dbReference type="ChEBI" id="CHEBI:49883"/>
        <label>1</label>
    </ligand>
</feature>
<feature type="binding site" evidence="1">
    <location>
        <position position="49"/>
    </location>
    <ligand>
        <name>[4Fe-4S] cluster</name>
        <dbReference type="ChEBI" id="CHEBI:49883"/>
        <label>1</label>
    </ligand>
</feature>
<feature type="binding site" evidence="1">
    <location>
        <position position="83"/>
    </location>
    <ligand>
        <name>[4Fe-4S] cluster</name>
        <dbReference type="ChEBI" id="CHEBI:49883"/>
        <label>1</label>
    </ligand>
</feature>
<feature type="binding site" evidence="1">
    <location>
        <position position="157"/>
    </location>
    <ligand>
        <name>[4Fe-4S] cluster</name>
        <dbReference type="ChEBI" id="CHEBI:49883"/>
        <label>2</label>
        <note>4Fe-4S-S-AdoMet</note>
    </ligand>
</feature>
<feature type="binding site" evidence="1">
    <location>
        <position position="161"/>
    </location>
    <ligand>
        <name>[4Fe-4S] cluster</name>
        <dbReference type="ChEBI" id="CHEBI:49883"/>
        <label>2</label>
        <note>4Fe-4S-S-AdoMet</note>
    </ligand>
</feature>
<feature type="binding site" evidence="1">
    <location>
        <position position="164"/>
    </location>
    <ligand>
        <name>[4Fe-4S] cluster</name>
        <dbReference type="ChEBI" id="CHEBI:49883"/>
        <label>2</label>
        <note>4Fe-4S-S-AdoMet</note>
    </ligand>
</feature>